<proteinExistence type="inferred from homology"/>
<name>GPMI_COXBR</name>
<accession>A9N970</accession>
<keyword id="KW-0324">Glycolysis</keyword>
<keyword id="KW-0413">Isomerase</keyword>
<keyword id="KW-0464">Manganese</keyword>
<keyword id="KW-0479">Metal-binding</keyword>
<sequence length="519" mass="57491">MTQADNQNPKPMVLIILDGFGESDETTHNAIKEANTPTLDKLFRHYPHTLLEASGRAVGLPDGQMGNSEVGHLHIGGGRKVPQDLTRIDAAIASGEFYENPALIEALEKAKALNKAVHILGLLSPGGVHSRDNQIAALVELAHHCGIKKIYLHAILDGRDTPPKSALLSIEKITDQFHAYGNGKIASLIGRYYAMDRDKRWDRTEKAYDLLTQGTAQFHALTAKEGLMLAYEQGNTDEFVSPTSIHRHNETPITIEDGDVVVFMNFRADRARQLTYAFLDDHFTAFNRQVRPKLSAFVTLTAYAKDIHAAVAFPPLELHNTLGEYLSARGYRQLRIAETEKYAHVTYFLNGGQEAPFNGEDRLLIPSPKVATYDLQPEMSAVEMTNKLVEIIQNDDYDLIVCNFANPDMVGHTGDETATREAIQVIDDCLKRIITALQSVGGEALITADHGNAEKMFDEKTNQPHTAHTSNLVPLIYVGREAQFCKEVGALDDVAPTLLYLMGLEKPREMTGRNLITLK</sequence>
<protein>
    <recommendedName>
        <fullName evidence="1">2,3-bisphosphoglycerate-independent phosphoglycerate mutase</fullName>
        <shortName evidence="1">BPG-independent PGAM</shortName>
        <shortName evidence="1">Phosphoglyceromutase</shortName>
        <shortName evidence="1">iPGM</shortName>
        <ecNumber evidence="1">5.4.2.12</ecNumber>
    </recommendedName>
</protein>
<evidence type="ECO:0000255" key="1">
    <source>
        <dbReference type="HAMAP-Rule" id="MF_01038"/>
    </source>
</evidence>
<reference key="1">
    <citation type="submission" date="2007-11" db="EMBL/GenBank/DDBJ databases">
        <title>Genome sequencing of phylogenetically and phenotypically diverse Coxiella burnetii isolates.</title>
        <authorList>
            <person name="Seshadri R."/>
            <person name="Samuel J.E."/>
        </authorList>
    </citation>
    <scope>NUCLEOTIDE SEQUENCE [LARGE SCALE GENOMIC DNA]</scope>
    <source>
        <strain>RSA 331 / Henzerling II</strain>
    </source>
</reference>
<comment type="function">
    <text evidence="1">Catalyzes the interconversion of 2-phosphoglycerate and 3-phosphoglycerate.</text>
</comment>
<comment type="catalytic activity">
    <reaction evidence="1">
        <text>(2R)-2-phosphoglycerate = (2R)-3-phosphoglycerate</text>
        <dbReference type="Rhea" id="RHEA:15901"/>
        <dbReference type="ChEBI" id="CHEBI:58272"/>
        <dbReference type="ChEBI" id="CHEBI:58289"/>
        <dbReference type="EC" id="5.4.2.12"/>
    </reaction>
</comment>
<comment type="cofactor">
    <cofactor evidence="1">
        <name>Mn(2+)</name>
        <dbReference type="ChEBI" id="CHEBI:29035"/>
    </cofactor>
    <text evidence="1">Binds 2 manganese ions per subunit.</text>
</comment>
<comment type="pathway">
    <text evidence="1">Carbohydrate degradation; glycolysis; pyruvate from D-glyceraldehyde 3-phosphate: step 3/5.</text>
</comment>
<comment type="subunit">
    <text evidence="1">Monomer.</text>
</comment>
<comment type="similarity">
    <text evidence="1">Belongs to the BPG-independent phosphoglycerate mutase family.</text>
</comment>
<organism>
    <name type="scientific">Coxiella burnetii (strain RSA 331 / Henzerling II)</name>
    <dbReference type="NCBI Taxonomy" id="360115"/>
    <lineage>
        <taxon>Bacteria</taxon>
        <taxon>Pseudomonadati</taxon>
        <taxon>Pseudomonadota</taxon>
        <taxon>Gammaproteobacteria</taxon>
        <taxon>Legionellales</taxon>
        <taxon>Coxiellaceae</taxon>
        <taxon>Coxiella</taxon>
    </lineage>
</organism>
<gene>
    <name evidence="1" type="primary">gpmI</name>
    <name type="ordered locus">COXBURSA331_A1720</name>
</gene>
<feature type="chain" id="PRO_1000084302" description="2,3-bisphosphoglycerate-independent phosphoglycerate mutase">
    <location>
        <begin position="1"/>
        <end position="519"/>
    </location>
</feature>
<feature type="active site" description="Phosphoserine intermediate" evidence="1">
    <location>
        <position position="68"/>
    </location>
</feature>
<feature type="binding site" evidence="1">
    <location>
        <position position="18"/>
    </location>
    <ligand>
        <name>Mn(2+)</name>
        <dbReference type="ChEBI" id="CHEBI:29035"/>
        <label>2</label>
    </ligand>
</feature>
<feature type="binding site" evidence="1">
    <location>
        <position position="68"/>
    </location>
    <ligand>
        <name>Mn(2+)</name>
        <dbReference type="ChEBI" id="CHEBI:29035"/>
        <label>2</label>
    </ligand>
</feature>
<feature type="binding site" evidence="1">
    <location>
        <position position="129"/>
    </location>
    <ligand>
        <name>substrate</name>
    </ligand>
</feature>
<feature type="binding site" evidence="1">
    <location>
        <begin position="159"/>
        <end position="160"/>
    </location>
    <ligand>
        <name>substrate</name>
    </ligand>
</feature>
<feature type="binding site" evidence="1">
    <location>
        <position position="191"/>
    </location>
    <ligand>
        <name>substrate</name>
    </ligand>
</feature>
<feature type="binding site" evidence="1">
    <location>
        <position position="197"/>
    </location>
    <ligand>
        <name>substrate</name>
    </ligand>
</feature>
<feature type="binding site" evidence="1">
    <location>
        <begin position="267"/>
        <end position="270"/>
    </location>
    <ligand>
        <name>substrate</name>
    </ligand>
</feature>
<feature type="binding site" evidence="1">
    <location>
        <position position="341"/>
    </location>
    <ligand>
        <name>substrate</name>
    </ligand>
</feature>
<feature type="binding site" evidence="1">
    <location>
        <position position="408"/>
    </location>
    <ligand>
        <name>Mn(2+)</name>
        <dbReference type="ChEBI" id="CHEBI:29035"/>
        <label>1</label>
    </ligand>
</feature>
<feature type="binding site" evidence="1">
    <location>
        <position position="412"/>
    </location>
    <ligand>
        <name>Mn(2+)</name>
        <dbReference type="ChEBI" id="CHEBI:29035"/>
        <label>1</label>
    </ligand>
</feature>
<feature type="binding site" evidence="1">
    <location>
        <position position="449"/>
    </location>
    <ligand>
        <name>Mn(2+)</name>
        <dbReference type="ChEBI" id="CHEBI:29035"/>
        <label>2</label>
    </ligand>
</feature>
<feature type="binding site" evidence="1">
    <location>
        <position position="450"/>
    </location>
    <ligand>
        <name>Mn(2+)</name>
        <dbReference type="ChEBI" id="CHEBI:29035"/>
        <label>2</label>
    </ligand>
</feature>
<feature type="binding site" evidence="1">
    <location>
        <position position="468"/>
    </location>
    <ligand>
        <name>Mn(2+)</name>
        <dbReference type="ChEBI" id="CHEBI:29035"/>
        <label>1</label>
    </ligand>
</feature>
<dbReference type="EC" id="5.4.2.12" evidence="1"/>
<dbReference type="EMBL" id="CP000890">
    <property type="protein sequence ID" value="ABX77950.1"/>
    <property type="molecule type" value="Genomic_DNA"/>
</dbReference>
<dbReference type="RefSeq" id="WP_012220699.1">
    <property type="nucleotide sequence ID" value="NC_010117.1"/>
</dbReference>
<dbReference type="SMR" id="A9N970"/>
<dbReference type="KEGG" id="cbs:COXBURSA331_A1720"/>
<dbReference type="HOGENOM" id="CLU_026099_2_0_6"/>
<dbReference type="UniPathway" id="UPA00109">
    <property type="reaction ID" value="UER00186"/>
</dbReference>
<dbReference type="GO" id="GO:0005829">
    <property type="term" value="C:cytosol"/>
    <property type="evidence" value="ECO:0007669"/>
    <property type="project" value="TreeGrafter"/>
</dbReference>
<dbReference type="GO" id="GO:0030145">
    <property type="term" value="F:manganese ion binding"/>
    <property type="evidence" value="ECO:0007669"/>
    <property type="project" value="UniProtKB-UniRule"/>
</dbReference>
<dbReference type="GO" id="GO:0004619">
    <property type="term" value="F:phosphoglycerate mutase activity"/>
    <property type="evidence" value="ECO:0007669"/>
    <property type="project" value="UniProtKB-EC"/>
</dbReference>
<dbReference type="GO" id="GO:0006007">
    <property type="term" value="P:glucose catabolic process"/>
    <property type="evidence" value="ECO:0007669"/>
    <property type="project" value="InterPro"/>
</dbReference>
<dbReference type="GO" id="GO:0006096">
    <property type="term" value="P:glycolytic process"/>
    <property type="evidence" value="ECO:0007669"/>
    <property type="project" value="UniProtKB-UniRule"/>
</dbReference>
<dbReference type="CDD" id="cd16010">
    <property type="entry name" value="iPGM"/>
    <property type="match status" value="1"/>
</dbReference>
<dbReference type="FunFam" id="3.40.1450.10:FF:000001">
    <property type="entry name" value="2,3-bisphosphoglycerate-independent phosphoglycerate mutase"/>
    <property type="match status" value="1"/>
</dbReference>
<dbReference type="Gene3D" id="3.40.720.10">
    <property type="entry name" value="Alkaline Phosphatase, subunit A"/>
    <property type="match status" value="1"/>
</dbReference>
<dbReference type="Gene3D" id="3.40.1450.10">
    <property type="entry name" value="BPG-independent phosphoglycerate mutase, domain B"/>
    <property type="match status" value="1"/>
</dbReference>
<dbReference type="HAMAP" id="MF_01038">
    <property type="entry name" value="GpmI"/>
    <property type="match status" value="1"/>
</dbReference>
<dbReference type="InterPro" id="IPR017850">
    <property type="entry name" value="Alkaline_phosphatase_core_sf"/>
</dbReference>
<dbReference type="InterPro" id="IPR011258">
    <property type="entry name" value="BPG-indep_PGM_N"/>
</dbReference>
<dbReference type="InterPro" id="IPR006124">
    <property type="entry name" value="Metalloenzyme"/>
</dbReference>
<dbReference type="InterPro" id="IPR036646">
    <property type="entry name" value="PGAM_B_sf"/>
</dbReference>
<dbReference type="InterPro" id="IPR005995">
    <property type="entry name" value="Pgm_bpd_ind"/>
</dbReference>
<dbReference type="NCBIfam" id="TIGR01307">
    <property type="entry name" value="pgm_bpd_ind"/>
    <property type="match status" value="1"/>
</dbReference>
<dbReference type="PANTHER" id="PTHR31637">
    <property type="entry name" value="2,3-BISPHOSPHOGLYCERATE-INDEPENDENT PHOSPHOGLYCERATE MUTASE"/>
    <property type="match status" value="1"/>
</dbReference>
<dbReference type="PANTHER" id="PTHR31637:SF0">
    <property type="entry name" value="2,3-BISPHOSPHOGLYCERATE-INDEPENDENT PHOSPHOGLYCERATE MUTASE"/>
    <property type="match status" value="1"/>
</dbReference>
<dbReference type="Pfam" id="PF06415">
    <property type="entry name" value="iPGM_N"/>
    <property type="match status" value="1"/>
</dbReference>
<dbReference type="Pfam" id="PF01676">
    <property type="entry name" value="Metalloenzyme"/>
    <property type="match status" value="1"/>
</dbReference>
<dbReference type="PIRSF" id="PIRSF001492">
    <property type="entry name" value="IPGAM"/>
    <property type="match status" value="1"/>
</dbReference>
<dbReference type="SUPFAM" id="SSF64158">
    <property type="entry name" value="2,3-Bisphosphoglycerate-independent phosphoglycerate mutase, substrate-binding domain"/>
    <property type="match status" value="1"/>
</dbReference>
<dbReference type="SUPFAM" id="SSF53649">
    <property type="entry name" value="Alkaline phosphatase-like"/>
    <property type="match status" value="1"/>
</dbReference>